<comment type="function">
    <text evidence="1">Transcriptional activator that increases RNA Pol II processivity, thereby increasing the level of full-length viral transcripts. Recognizes a hairpin structure at the 5'-LTR of the nascent viral mRNAs referred to as the transactivation responsive RNA element (TAR) and recruits the cyclin T1-CDK9 complex (P-TEFb complex) that will in turn hyperphosphorylate the RNA polymerase II to allow efficient elongation. The CDK9 component of P-TEFb and other Tat-activated kinases hyperphosphorylate the C-terminus of RNA Pol II that becomes stabilized and much more processive. Other factors such as HTATSF1/Tat-SF1, SUPT5H/SPT5, and HTATIP2 are also important for Tat's function. Besides its effect on RNA Pol II processivity, Tat induces chromatin remodeling of proviral genes by recruiting the histone acetyltransferases (HATs) CREBBP, EP300 and PCAF to the chromatin. This also contributes to the increase in proviral transcription rate, especially when the provirus integrates in transcriptionally silent region of the host genome. To ensure maximal activation of the LTR, Tat mediates nuclear translocation of NF-kappa-B by interacting with host RELA. Through its interaction with host TBP, Tat may also modulate transcription initiation. Tat can reactivate a latently infected cell by penetrating in it and transactivating its LTR promoter. In the cytoplasm, Tat is thought to act as a translational activator of HIV-1 mRNAs.</text>
</comment>
<comment type="function">
    <text evidence="1">Extracellular circulating Tat can be endocytosed by surrounding uninfected cells via the binding to several surface receptors such as CD26, CXCR4, heparan sulfate proteoglycans (HSPG) or LDLR. Neurons are rarely infected, but they internalize Tat via their LDLR. Through its interaction with nuclear HATs, Tat is potentially able to control the acetylation-dependent cellular gene expression. Modulates the expression of many cellular genes involved in cell survival, proliferation or in coding for cytokines or cytokine receptors. Tat plays a role in T-cell and neurons apoptosis. Tat induced neurotoxicity and apoptosis probably contribute to neuroAIDS. Circulating Tat also acts as a chemokine-like and/or growth factor-like molecule that binds to specific receptors on the surface of the cells, affecting many cellular pathways. In the vascular system, Tat binds to ITGAV/ITGB3 and ITGA5/ITGB1 integrins dimers at the surface of endothelial cells and competes with bFGF for heparin-binding sites, leading to an excess of soluble bFGF.</text>
</comment>
<comment type="subunit">
    <text evidence="1">Interacts with host CCNT1. Associates with the P-TEFb complex composed at least of Tat, P-TEFb (CDK9 and CCNT1), TAR RNA, RNA Pol II. Recruits the HATs CREBBP, TAF1/TFIID, EP300, PCAF and GCN5L2. Interacts with host KAT5/Tip60; this interaction targets the latter to degradation. Interacts with the host deacetylase SIRT1. Interacts with host capping enzyme RNGTT; this interaction stimulates RNGTT. Binds to host KDR, and to the host integrins ITGAV/ITGB3 and ITGA5/ITGB1. Interacts with host KPNB1/importin beta-1 without previous binding to KPNA1/importin alpha-1. Interacts with EIF2AK2. Interacts with host nucleosome assembly protein NAP1L1; this interaction may be required for the transport of Tat within the nucleus, since the two proteins interact at the nuclear rim. Interacts with host C1QBP/SF2P32; this interaction involves lysine-acetylated Tat. Interacts with the host chemokine receptors CCR2, CCR3 and CXCR4. Interacts with host DPP4/CD26; this interaction may trigger an anti-proliferative effect. Interacts with host LDLR. Interacts with the host extracellular matrix metalloproteinase MMP1. Interacts with host PRMT6; this interaction mediates Tat's methylation. Interacts with, and is ubiquitinated by MDM2/Hdm2. Interacts with host PSMC3 and HTATIP2. Interacts with STAB1; this interaction may overcome SATB1-mediated repression of IL2 and IL2RA (interleukin) in T cells by binding to the same domain than HDAC1. Interacts (when acetylated) with human CDK13, thereby increasing HIV-1 mRNA splicing and promoting the production of the doubly spliced HIV-1 protein Nef. Interacts with host TBP; this interaction modulates the activity of transcriptional pre-initiation complex. Interacts with host RELA. Interacts with host PLSCR1; this interaction negatively regulates Tat transactivation activity by altering its subcellular distribution.</text>
</comment>
<comment type="subcellular location">
    <subcellularLocation>
        <location evidence="1">Host nucleus</location>
        <location evidence="1">Host nucleolus</location>
    </subcellularLocation>
    <subcellularLocation>
        <location evidence="1">Host cytoplasm</location>
    </subcellularLocation>
    <subcellularLocation>
        <location evidence="1">Secreted</location>
    </subcellularLocation>
    <text evidence="1">Probably localizes to both nuclear and nucleolar compartments. Nuclear localization is mediated through the interaction of the nuclear localization signal with importin KPNB1. Secretion occurs through a Golgi-independent pathway. Tat is released from infected cells to the extracellular space where it remains associated to the cell membrane, or is secreted into the cerebrospinal fluid and sera. Extracellular Tat can be endocytosed by surrounding uninfected cells via binding to several receptors depending on the cell type.</text>
</comment>
<comment type="alternative products">
    <event type="alternative splicing"/>
    <isoform>
        <id>P69698-1</id>
        <name>Long</name>
        <sequence type="displayed"/>
    </isoform>
    <isoform>
        <id>P69698-2</id>
        <name>Short</name>
        <sequence type="described" ref="VSP_022411"/>
    </isoform>
</comment>
<comment type="domain">
    <text evidence="1">The cell attachment site mediates the interaction with ITGAV/ITGB3 and ITGA5/ITGB1 integrins, leading to vascular cell migration and invasion. This interaction also provides endothelial cells with the adhesion signal they require to grow in response to mitogens.</text>
</comment>
<comment type="domain">
    <text evidence="1">The Cys-rich region may bind 2 zinc ions. This region is involved in binding to KAT5.</text>
</comment>
<comment type="domain">
    <text evidence="1">The transactivation domain mediates the interaction with CCNT1, GCN5L2, and MDM2.</text>
</comment>
<comment type="domain">
    <text>The Arg-rich RNA-binding region binds the TAR RNA. This region also mediates the nuclear localization through direct binding to KPNB1 and is involved in Tat's transfer across cell membranes (protein transduction). The same region is required for the interaction with EP300, PCAF, EIF2AK2 and KDR.</text>
</comment>
<comment type="PTM">
    <text evidence="1">Asymmetrical arginine methylation by host PRMT6 seems to diminish the transactivation capacity of Tat and affects the interaction with host CCNT1.</text>
</comment>
<comment type="PTM">
    <text evidence="1">Acetylation by EP300, CREBBP, GCN5L2/GCN5 and PCAF regulates the transactivation activity of Tat. EP300-mediated acetylation of Lys-50 promotes dissociation of Tat from the TAR RNA through the competitive binding to PCAF's bromodomain. In addition, the non-acetylated Tat's N-terminus can also interact with PCAF. PCAF-mediated acetylation of Lys-28 enhances Tat's binding to CCNT1. Lys-50 is deacetylated by SIRT1.</text>
</comment>
<comment type="PTM">
    <text evidence="1">Polyubiquitination by host MDM2 does not target Tat to degradation, but activates its transactivation function and fosters interaction with CCNT1 and TAR RNA.</text>
</comment>
<comment type="PTM">
    <text evidence="1">Phosphorylated by EIF2AK2 on serine and threonine residues adjacent to the basic region important for TAR RNA binding and function. Phosphorylation of Tat by EIF2AK2 is dependent on the prior activation of EIF2AK2 by dsRNA.</text>
</comment>
<comment type="miscellaneous">
    <text evidence="1">This truncated variant has a premature stop codon. It may have arose as a consequence of tissue culture passaging.</text>
</comment>
<comment type="miscellaneous">
    <text evidence="1">HIV-1 lineages are divided in three main groups, M (for Major), O (for Outlier), and N (for New, or Non-M, Non-O). The vast majority of strains found worldwide belong to the group M. Group O seems to be endemic to and largely confined to Cameroon and neighboring countries in West Central Africa, where these viruses represent a small minority of HIV-1 strains. The group N is represented by a limited number of isolates from Cameroonian persons. The group M is further subdivided in 9 clades or subtypes (A to D, F to H, J and K).</text>
</comment>
<comment type="miscellaneous">
    <molecule>Isoform Short</molecule>
    <text evidence="3">Expressed in the late stage of the infection cycle, when unspliced viral RNAs are exported to the cytoplasm by the viral Rev protein.</text>
</comment>
<comment type="similarity">
    <text evidence="1">Belongs to the lentiviruses Tat family.</text>
</comment>
<name>TAT_HV1H3</name>
<feature type="chain" id="PRO_0000085338" description="Protein Tat">
    <location>
        <begin position="1"/>
        <end position="86"/>
    </location>
</feature>
<feature type="region of interest" description="Transactivation" evidence="1">
    <location>
        <begin position="1"/>
        <end position="48"/>
    </location>
</feature>
<feature type="region of interest" description="Interaction with human CREBBP" evidence="1">
    <location>
        <begin position="1"/>
        <end position="24"/>
    </location>
</feature>
<feature type="region of interest" description="Cysteine-rich" evidence="1">
    <location>
        <begin position="22"/>
        <end position="37"/>
    </location>
</feature>
<feature type="region of interest" description="Core" evidence="1">
    <location>
        <begin position="38"/>
        <end position="48"/>
    </location>
</feature>
<feature type="region of interest" description="Disordered" evidence="2">
    <location>
        <begin position="48"/>
        <end position="86"/>
    </location>
</feature>
<feature type="region of interest" description="Interaction with the host capping enzyme RNGTT" evidence="1">
    <location>
        <begin position="49"/>
        <end position="86"/>
    </location>
</feature>
<feature type="short sequence motif" description="Nuclear localization signal, RNA-binding (TAR), and protein transduction" evidence="1">
    <location>
        <begin position="49"/>
        <end position="57"/>
    </location>
</feature>
<feature type="short sequence motif" description="Cell attachment site" evidence="1">
    <location>
        <begin position="78"/>
        <end position="80"/>
    </location>
</feature>
<feature type="compositionally biased region" description="Basic residues" evidence="2">
    <location>
        <begin position="48"/>
        <end position="58"/>
    </location>
</feature>
<feature type="compositionally biased region" description="Polar residues" evidence="2">
    <location>
        <begin position="62"/>
        <end position="79"/>
    </location>
</feature>
<feature type="binding site" evidence="1">
    <location>
        <position position="22"/>
    </location>
    <ligand>
        <name>Zn(2+)</name>
        <dbReference type="ChEBI" id="CHEBI:29105"/>
        <label>1</label>
    </ligand>
</feature>
<feature type="binding site" evidence="1">
    <location>
        <position position="25"/>
    </location>
    <ligand>
        <name>Zn(2+)</name>
        <dbReference type="ChEBI" id="CHEBI:29105"/>
        <label>2</label>
    </ligand>
</feature>
<feature type="binding site" evidence="1">
    <location>
        <position position="27"/>
    </location>
    <ligand>
        <name>Zn(2+)</name>
        <dbReference type="ChEBI" id="CHEBI:29105"/>
        <label>2</label>
    </ligand>
</feature>
<feature type="binding site" evidence="1">
    <location>
        <position position="30"/>
    </location>
    <ligand>
        <name>Zn(2+)</name>
        <dbReference type="ChEBI" id="CHEBI:29105"/>
        <label>2</label>
    </ligand>
</feature>
<feature type="binding site" evidence="1">
    <location>
        <position position="33"/>
    </location>
    <ligand>
        <name>Zn(2+)</name>
        <dbReference type="ChEBI" id="CHEBI:29105"/>
        <label>1</label>
    </ligand>
</feature>
<feature type="binding site" evidence="1">
    <location>
        <position position="34"/>
    </location>
    <ligand>
        <name>Zn(2+)</name>
        <dbReference type="ChEBI" id="CHEBI:29105"/>
        <label>1</label>
    </ligand>
</feature>
<feature type="binding site" evidence="1">
    <location>
        <position position="37"/>
    </location>
    <ligand>
        <name>Zn(2+)</name>
        <dbReference type="ChEBI" id="CHEBI:29105"/>
        <label>1</label>
    </ligand>
</feature>
<feature type="site" description="Essential for Tat translocation through the endosomal membrane" evidence="1">
    <location>
        <position position="11"/>
    </location>
</feature>
<feature type="modified residue" description="N6-acetyllysine; by host PCAF" evidence="1">
    <location>
        <position position="28"/>
    </location>
</feature>
<feature type="modified residue" description="N6-acetyllysine; by host EP300 and GCN5L2" evidence="1">
    <location>
        <position position="50"/>
    </location>
</feature>
<feature type="modified residue" description="N6-acetyllysine; by host EP300 and GCN5L2" evidence="1">
    <location>
        <position position="51"/>
    </location>
</feature>
<feature type="modified residue" description="Asymmetric dimethylarginine; by host PRMT6" evidence="1">
    <location>
        <position position="52"/>
    </location>
</feature>
<feature type="modified residue" description="Asymmetric dimethylarginine; by host PRMT6" evidence="1">
    <location>
        <position position="53"/>
    </location>
</feature>
<feature type="cross-link" description="Glycyl lysine isopeptide (Lys-Gly) (interchain with G-Cter in ubiquitin)" evidence="1">
    <location>
        <position position="71"/>
    </location>
</feature>
<feature type="splice variant" id="VSP_022411" description="In isoform Short.">
    <location>
        <begin position="73"/>
        <end position="86"/>
    </location>
</feature>
<feature type="helix" evidence="4">
    <location>
        <begin position="10"/>
        <end position="12"/>
    </location>
</feature>
<feature type="helix" evidence="4">
    <location>
        <begin position="28"/>
        <end position="31"/>
    </location>
</feature>
<feature type="helix" evidence="4">
    <location>
        <begin position="35"/>
        <end position="40"/>
    </location>
</feature>
<feature type="turn" evidence="4">
    <location>
        <begin position="41"/>
        <end position="43"/>
    </location>
</feature>
<gene>
    <name evidence="1" type="primary">tat</name>
</gene>
<proteinExistence type="evidence at protein level"/>
<organismHost>
    <name type="scientific">Homo sapiens</name>
    <name type="common">Human</name>
    <dbReference type="NCBI Taxonomy" id="9606"/>
</organismHost>
<protein>
    <recommendedName>
        <fullName evidence="1">Protein Tat</fullName>
    </recommendedName>
    <alternativeName>
        <fullName evidence="1">Transactivating regulatory protein</fullName>
    </alternativeName>
</protein>
<keyword id="KW-0002">3D-structure</keyword>
<keyword id="KW-0007">Acetylation</keyword>
<keyword id="KW-0010">Activator</keyword>
<keyword id="KW-0014">AIDS</keyword>
<keyword id="KW-0025">Alternative splicing</keyword>
<keyword id="KW-0053">Apoptosis</keyword>
<keyword id="KW-1035">Host cytoplasm</keyword>
<keyword id="KW-1048">Host nucleus</keyword>
<keyword id="KW-0945">Host-virus interaction</keyword>
<keyword id="KW-1090">Inhibition of host innate immune response by virus</keyword>
<keyword id="KW-1114">Inhibition of host interferon signaling pathway by virus</keyword>
<keyword id="KW-0922">Interferon antiviral system evasion</keyword>
<keyword id="KW-1017">Isopeptide bond</keyword>
<keyword id="KW-0479">Metal-binding</keyword>
<keyword id="KW-0488">Methylation</keyword>
<keyword id="KW-1122">Modulation of host chromatin by virus</keyword>
<keyword id="KW-1126">Modulation of host PP1 activity by virus</keyword>
<keyword id="KW-0597">Phosphoprotein</keyword>
<keyword id="KW-0694">RNA-binding</keyword>
<keyword id="KW-0964">Secreted</keyword>
<keyword id="KW-0804">Transcription</keyword>
<keyword id="KW-0805">Transcription regulation</keyword>
<keyword id="KW-0832">Ubl conjugation</keyword>
<keyword id="KW-0899">Viral immunoevasion</keyword>
<keyword id="KW-0862">Zinc</keyword>
<reference key="1">
    <citation type="journal article" date="1985" name="Cell">
        <title>HTLV-III env gene products synthesized in E. coli are recognized by antibodies present in the sera of AIDS patients.</title>
        <authorList>
            <person name="Crowl R."/>
            <person name="Ganguly K."/>
            <person name="Gordon M."/>
            <person name="Conroy R."/>
            <person name="Schaber M."/>
            <person name="Kramer R."/>
            <person name="Shaw G.M."/>
            <person name="Wong-Staal F."/>
            <person name="Reddy E.P."/>
        </authorList>
    </citation>
    <scope>NUCLEOTIDE SEQUENCE [GENOMIC RNA]</scope>
</reference>
<reference key="2">
    <citation type="journal article" date="2005" name="Microbes Infect.">
        <title>Decoding Tat: the biology of HIV Tat posttranslational modifications.</title>
        <authorList>
            <person name="Hetzer C."/>
            <person name="Dormeyer W."/>
            <person name="Schnolzer M."/>
            <person name="Ott M."/>
        </authorList>
    </citation>
    <scope>REVIEW</scope>
    <scope>ALTERNATIVE SPLICING</scope>
</reference>
<reference key="3">
    <citation type="journal article" date="2006" name="Front. Biosci.">
        <title>The multiple functions of HIV-1 Tat: proliferation versus apoptosis.</title>
        <authorList>
            <person name="Peruzzi F."/>
        </authorList>
    </citation>
    <scope>REVIEW</scope>
</reference>
<reference key="4">
    <citation type="journal article" date="2006" name="Microbes Infect.">
        <title>HIV tat and neurotoxicity.</title>
        <authorList>
            <person name="King J.E."/>
            <person name="Eugenin E.A."/>
            <person name="Buckner C.M."/>
            <person name="Berman J.W."/>
        </authorList>
    </citation>
    <scope>REVIEW</scope>
</reference>
<accession>P69698</accession>
<accession>P04606</accession>
<sequence>MEPVDPRLEPWKHPGSQPKTACTNCYCKKCCFHCQVCFITKALGISYGRKKRRQRRRPPQGSQTHQVSLSKQPTSQSRGDPTGPKE</sequence>
<organism>
    <name type="scientific">Human immunodeficiency virus type 1 group M subtype B (isolate HXB3)</name>
    <name type="common">HIV-1</name>
    <dbReference type="NCBI Taxonomy" id="11707"/>
    <lineage>
        <taxon>Viruses</taxon>
        <taxon>Riboviria</taxon>
        <taxon>Pararnavirae</taxon>
        <taxon>Artverviricota</taxon>
        <taxon>Revtraviricetes</taxon>
        <taxon>Ortervirales</taxon>
        <taxon>Retroviridae</taxon>
        <taxon>Orthoretrovirinae</taxon>
        <taxon>Lentivirus</taxon>
        <taxon>Human immunodeficiency virus type 1</taxon>
    </lineage>
</organism>
<evidence type="ECO:0000255" key="1">
    <source>
        <dbReference type="HAMAP-Rule" id="MF_04079"/>
    </source>
</evidence>
<evidence type="ECO:0000256" key="2">
    <source>
        <dbReference type="SAM" id="MobiDB-lite"/>
    </source>
</evidence>
<evidence type="ECO:0000305" key="3"/>
<evidence type="ECO:0007829" key="4">
    <source>
        <dbReference type="PDB" id="4OGR"/>
    </source>
</evidence>
<dbReference type="EMBL" id="M14100">
    <property type="protein sequence ID" value="AAA44676.1"/>
    <property type="molecule type" value="Genomic_RNA"/>
</dbReference>
<dbReference type="PIR" id="S33982">
    <property type="entry name" value="S33982"/>
</dbReference>
<dbReference type="PDB" id="4OGR">
    <property type="method" value="X-ray"/>
    <property type="resolution" value="3.00 A"/>
    <property type="chains" value="D/H/M=1-57"/>
</dbReference>
<dbReference type="PDBsum" id="4OGR"/>
<dbReference type="SMR" id="P69698"/>
<dbReference type="EvolutionaryTrace" id="P69698"/>
<dbReference type="GO" id="GO:0005576">
    <property type="term" value="C:extracellular region"/>
    <property type="evidence" value="ECO:0007669"/>
    <property type="project" value="UniProtKB-SubCell"/>
</dbReference>
<dbReference type="GO" id="GO:0030430">
    <property type="term" value="C:host cell cytoplasm"/>
    <property type="evidence" value="ECO:0007669"/>
    <property type="project" value="UniProtKB-SubCell"/>
</dbReference>
<dbReference type="GO" id="GO:0044196">
    <property type="term" value="C:host cell nucleolus"/>
    <property type="evidence" value="ECO:0007669"/>
    <property type="project" value="UniProtKB-SubCell"/>
</dbReference>
<dbReference type="GO" id="GO:0042805">
    <property type="term" value="F:actinin binding"/>
    <property type="evidence" value="ECO:0007669"/>
    <property type="project" value="UniProtKB-UniRule"/>
</dbReference>
<dbReference type="GO" id="GO:0030332">
    <property type="term" value="F:cyclin binding"/>
    <property type="evidence" value="ECO:0007669"/>
    <property type="project" value="UniProtKB-UniRule"/>
</dbReference>
<dbReference type="GO" id="GO:0046872">
    <property type="term" value="F:metal ion binding"/>
    <property type="evidence" value="ECO:0007669"/>
    <property type="project" value="UniProtKB-UniRule"/>
</dbReference>
<dbReference type="GO" id="GO:0019904">
    <property type="term" value="F:protein domain specific binding"/>
    <property type="evidence" value="ECO:0007669"/>
    <property type="project" value="UniProtKB-UniRule"/>
</dbReference>
<dbReference type="GO" id="GO:0004865">
    <property type="term" value="F:protein serine/threonine phosphatase inhibitor activity"/>
    <property type="evidence" value="ECO:0007669"/>
    <property type="project" value="UniProtKB-KW"/>
</dbReference>
<dbReference type="GO" id="GO:0001070">
    <property type="term" value="F:RNA-binding transcription regulator activity"/>
    <property type="evidence" value="ECO:0007669"/>
    <property type="project" value="UniProtKB-UniRule"/>
</dbReference>
<dbReference type="GO" id="GO:1990970">
    <property type="term" value="F:trans-activation response element binding"/>
    <property type="evidence" value="ECO:0007669"/>
    <property type="project" value="UniProtKB-UniRule"/>
</dbReference>
<dbReference type="GO" id="GO:0006351">
    <property type="term" value="P:DNA-templated transcription"/>
    <property type="evidence" value="ECO:0007669"/>
    <property type="project" value="UniProtKB-UniRule"/>
</dbReference>
<dbReference type="GO" id="GO:0032968">
    <property type="term" value="P:positive regulation of transcription elongation by RNA polymerase II"/>
    <property type="evidence" value="ECO:0007669"/>
    <property type="project" value="UniProtKB-UniRule"/>
</dbReference>
<dbReference type="GO" id="GO:0050434">
    <property type="term" value="P:positive regulation of viral transcription"/>
    <property type="evidence" value="ECO:0007669"/>
    <property type="project" value="UniProtKB-UniRule"/>
</dbReference>
<dbReference type="GO" id="GO:0039525">
    <property type="term" value="P:symbiont-mediated perturbation of host chromatin organization"/>
    <property type="evidence" value="ECO:0007669"/>
    <property type="project" value="UniProtKB-UniRule"/>
</dbReference>
<dbReference type="GO" id="GO:0052170">
    <property type="term" value="P:symbiont-mediated suppression of host innate immune response"/>
    <property type="evidence" value="ECO:0007669"/>
    <property type="project" value="UniProtKB-KW"/>
</dbReference>
<dbReference type="GO" id="GO:0039606">
    <property type="term" value="P:symbiont-mediated suppression of host translation initiation"/>
    <property type="evidence" value="ECO:0007669"/>
    <property type="project" value="UniProtKB-KW"/>
</dbReference>
<dbReference type="GO" id="GO:0039502">
    <property type="term" value="P:symbiont-mediated suppression of host type I interferon-mediated signaling pathway"/>
    <property type="evidence" value="ECO:0007669"/>
    <property type="project" value="UniProtKB-UniRule"/>
</dbReference>
<dbReference type="FunFam" id="4.10.20.10:FF:000001">
    <property type="entry name" value="Protein Tat"/>
    <property type="match status" value="1"/>
</dbReference>
<dbReference type="Gene3D" id="4.10.20.10">
    <property type="entry name" value="Tat domain"/>
    <property type="match status" value="1"/>
</dbReference>
<dbReference type="HAMAP" id="MF_04079">
    <property type="entry name" value="HIV_TAT"/>
    <property type="match status" value="1"/>
</dbReference>
<dbReference type="IDEAL" id="IID90039"/>
<dbReference type="InterPro" id="IPR001831">
    <property type="entry name" value="IV_Tat"/>
</dbReference>
<dbReference type="InterPro" id="IPR036963">
    <property type="entry name" value="Tat_dom_sf"/>
</dbReference>
<dbReference type="Pfam" id="PF00539">
    <property type="entry name" value="Tat"/>
    <property type="match status" value="1"/>
</dbReference>
<dbReference type="PRINTS" id="PR00055">
    <property type="entry name" value="HIVTATDOMAIN"/>
</dbReference>